<gene>
    <name type="primary">rpoZ</name>
</gene>
<dbReference type="EC" id="2.7.7.6"/>
<dbReference type="EMBL" id="AB081073">
    <property type="protein sequence ID" value="BAC23145.1"/>
    <property type="molecule type" value="Genomic_DNA"/>
</dbReference>
<dbReference type="RefSeq" id="WP_005319902.1">
    <property type="nucleotide sequence ID" value="NZ_SIXH01000103.1"/>
</dbReference>
<dbReference type="SMR" id="Q8GAU3"/>
<dbReference type="GeneID" id="97372516"/>
<dbReference type="OrthoDB" id="8481372at2"/>
<dbReference type="GO" id="GO:0000428">
    <property type="term" value="C:DNA-directed RNA polymerase complex"/>
    <property type="evidence" value="ECO:0007669"/>
    <property type="project" value="UniProtKB-KW"/>
</dbReference>
<dbReference type="GO" id="GO:0003677">
    <property type="term" value="F:DNA binding"/>
    <property type="evidence" value="ECO:0007669"/>
    <property type="project" value="UniProtKB-UniRule"/>
</dbReference>
<dbReference type="GO" id="GO:0003899">
    <property type="term" value="F:DNA-directed RNA polymerase activity"/>
    <property type="evidence" value="ECO:0007669"/>
    <property type="project" value="UniProtKB-UniRule"/>
</dbReference>
<dbReference type="GO" id="GO:0006351">
    <property type="term" value="P:DNA-templated transcription"/>
    <property type="evidence" value="ECO:0007669"/>
    <property type="project" value="UniProtKB-UniRule"/>
</dbReference>
<dbReference type="Gene3D" id="3.90.940.10">
    <property type="match status" value="1"/>
</dbReference>
<dbReference type="HAMAP" id="MF_00366">
    <property type="entry name" value="RNApol_bact_RpoZ"/>
    <property type="match status" value="1"/>
</dbReference>
<dbReference type="InterPro" id="IPR003716">
    <property type="entry name" value="DNA-dir_RNA_pol_omega"/>
</dbReference>
<dbReference type="InterPro" id="IPR006110">
    <property type="entry name" value="Pol_omega/Rpo6/RPB6"/>
</dbReference>
<dbReference type="InterPro" id="IPR036161">
    <property type="entry name" value="RPB6/omega-like_sf"/>
</dbReference>
<dbReference type="NCBIfam" id="TIGR00690">
    <property type="entry name" value="rpoZ"/>
    <property type="match status" value="1"/>
</dbReference>
<dbReference type="PANTHER" id="PTHR34476">
    <property type="entry name" value="DNA-DIRECTED RNA POLYMERASE SUBUNIT OMEGA"/>
    <property type="match status" value="1"/>
</dbReference>
<dbReference type="PANTHER" id="PTHR34476:SF1">
    <property type="entry name" value="DNA-DIRECTED RNA POLYMERASE SUBUNIT OMEGA"/>
    <property type="match status" value="1"/>
</dbReference>
<dbReference type="Pfam" id="PF01192">
    <property type="entry name" value="RNA_pol_Rpb6"/>
    <property type="match status" value="1"/>
</dbReference>
<dbReference type="SMART" id="SM01409">
    <property type="entry name" value="RNA_pol_Rpb6"/>
    <property type="match status" value="1"/>
</dbReference>
<dbReference type="SUPFAM" id="SSF63562">
    <property type="entry name" value="RPB6/omega subunit-like"/>
    <property type="match status" value="1"/>
</dbReference>
<comment type="function">
    <text>Promotes RNA polymerase assembly. Latches the N- and C-terminal regions of the beta' subunit thereby facilitating its interaction with the beta and alpha subunits. Required for kasugamycin production and aerial mycelium formation in S.kasugaensis and responsible for pleiotropy.</text>
</comment>
<comment type="catalytic activity">
    <reaction>
        <text>RNA(n) + a ribonucleoside 5'-triphosphate = RNA(n+1) + diphosphate</text>
        <dbReference type="Rhea" id="RHEA:21248"/>
        <dbReference type="Rhea" id="RHEA-COMP:14527"/>
        <dbReference type="Rhea" id="RHEA-COMP:17342"/>
        <dbReference type="ChEBI" id="CHEBI:33019"/>
        <dbReference type="ChEBI" id="CHEBI:61557"/>
        <dbReference type="ChEBI" id="CHEBI:140395"/>
        <dbReference type="EC" id="2.7.7.6"/>
    </reaction>
</comment>
<comment type="subunit">
    <text evidence="1">The RNAP catalytic core consists of 2 alpha, 1 beta, 1 beta' and 1 omega subunit. When a sigma factor is associated with the core the holoenzyme is formed, which can initiate transcription (By similarity).</text>
</comment>
<comment type="similarity">
    <text evidence="2">Belongs to the RNA polymerase subunit omega family.</text>
</comment>
<name>RPOZ_STRKA</name>
<protein>
    <recommendedName>
        <fullName>DNA-directed RNA polymerase subunit omega</fullName>
        <shortName>RNAP omega subunit</shortName>
        <ecNumber>2.7.7.6</ecNumber>
    </recommendedName>
    <alternativeName>
        <fullName>RNA polymerase omega subunit</fullName>
    </alternativeName>
    <alternativeName>
        <fullName>Transcriptase subunit omega</fullName>
    </alternativeName>
</protein>
<sequence>MSSSITAPEGIINPPIDELLEATDSKYSLVIYAAKRARQINAYYSQLGEGLLEYVGPLVDTHVHEKPLSIALREINAGLLTSEAIEGPAQ</sequence>
<organism>
    <name type="scientific">Streptomyces kasugaensis</name>
    <dbReference type="NCBI Taxonomy" id="1946"/>
    <lineage>
        <taxon>Bacteria</taxon>
        <taxon>Bacillati</taxon>
        <taxon>Actinomycetota</taxon>
        <taxon>Actinomycetes</taxon>
        <taxon>Kitasatosporales</taxon>
        <taxon>Streptomycetaceae</taxon>
        <taxon>Streptomyces</taxon>
    </lineage>
</organism>
<evidence type="ECO:0000250" key="1"/>
<evidence type="ECO:0000305" key="2"/>
<reference key="1">
    <citation type="journal article" date="2002" name="J. Bacteriol.">
        <title>The rpoZ gene, encoding the RNA polymerase omega subunit, is required for antibiotic production and morphological differentiation in Streptomyces kasugaensis.</title>
        <authorList>
            <person name="Kojima I."/>
            <person name="Kasuga K."/>
            <person name="Kobayashi M."/>
            <person name="Fukasawa A."/>
            <person name="Mizuno S."/>
            <person name="Arisawa A."/>
            <person name="Akagawa H."/>
        </authorList>
    </citation>
    <scope>NUCLEOTIDE SEQUENCE [GENOMIC DNA]</scope>
    <source>
        <strain>A1R6</strain>
    </source>
</reference>
<accession>Q8GAU3</accession>
<proteinExistence type="inferred from homology"/>
<keyword id="KW-0240">DNA-directed RNA polymerase</keyword>
<keyword id="KW-0548">Nucleotidyltransferase</keyword>
<keyword id="KW-0804">Transcription</keyword>
<keyword id="KW-0808">Transferase</keyword>
<feature type="chain" id="PRO_0000128991" description="DNA-directed RNA polymerase subunit omega">
    <location>
        <begin position="1"/>
        <end position="90"/>
    </location>
</feature>